<accession>A7ZNR5</accession>
<sequence>MYVVSTKQMLNNAQRGGYAVPAFNIHNLETMQVVVETAANLHAPVIIAGTPGTFTHAGTENLLALVSAMAKQYHHPLTIHLDHHTKFDDIAQKVRSGVRSVMIDASHLPFAQNISRVKEVVDFCHRFDVSVEAELGQLGGQEDDVQVNEADALYTNPAQAREFAEATGIDSLAVAIGTAHGMYASAPVLDFSRLENIRQWVNLPLVLHGASGLSTKDIQQTIKVGICKINVATELKNAFSQALKNYLTEHPEATDPRDYLQSAKSAMRDVVSKVIADCGCEGRA</sequence>
<protein>
    <recommendedName>
        <fullName evidence="1">D-tagatose-1,6-bisphosphate aldolase subunit GatY</fullName>
        <shortName evidence="1">TBPA</shortName>
        <shortName evidence="1">TagBP aldolase</shortName>
        <ecNumber evidence="1">4.1.2.40</ecNumber>
    </recommendedName>
    <alternativeName>
        <fullName evidence="1">D-tagatose-bisphosphate aldolase class II</fullName>
    </alternativeName>
    <alternativeName>
        <fullName evidence="1">Tagatose-bisphosphate aldolase</fullName>
    </alternativeName>
</protein>
<feature type="chain" id="PRO_0000355332" description="D-tagatose-1,6-bisphosphate aldolase subunit GatY">
    <location>
        <begin position="1"/>
        <end position="284"/>
    </location>
</feature>
<feature type="active site" description="Proton donor" evidence="1">
    <location>
        <position position="82"/>
    </location>
</feature>
<feature type="binding site" evidence="1">
    <location>
        <position position="83"/>
    </location>
    <ligand>
        <name>Zn(2+)</name>
        <dbReference type="ChEBI" id="CHEBI:29105"/>
        <note>catalytic</note>
    </ligand>
</feature>
<feature type="binding site" evidence="1">
    <location>
        <position position="180"/>
    </location>
    <ligand>
        <name>Zn(2+)</name>
        <dbReference type="ChEBI" id="CHEBI:29105"/>
        <note>catalytic</note>
    </ligand>
</feature>
<feature type="binding site" evidence="1">
    <location>
        <position position="181"/>
    </location>
    <ligand>
        <name>dihydroxyacetone phosphate</name>
        <dbReference type="ChEBI" id="CHEBI:57642"/>
    </ligand>
</feature>
<feature type="binding site" evidence="1">
    <location>
        <position position="208"/>
    </location>
    <ligand>
        <name>Zn(2+)</name>
        <dbReference type="ChEBI" id="CHEBI:29105"/>
        <note>catalytic</note>
    </ligand>
</feature>
<feature type="binding site" evidence="1">
    <location>
        <begin position="209"/>
        <end position="211"/>
    </location>
    <ligand>
        <name>dihydroxyacetone phosphate</name>
        <dbReference type="ChEBI" id="CHEBI:57642"/>
    </ligand>
</feature>
<feature type="binding site" evidence="1">
    <location>
        <begin position="230"/>
        <end position="233"/>
    </location>
    <ligand>
        <name>dihydroxyacetone phosphate</name>
        <dbReference type="ChEBI" id="CHEBI:57642"/>
    </ligand>
</feature>
<evidence type="ECO:0000255" key="1">
    <source>
        <dbReference type="HAMAP-Rule" id="MF_01294"/>
    </source>
</evidence>
<comment type="function">
    <text evidence="1">Catalytic subunit of the tagatose-1,6-bisphosphate aldolase GatYZ, which catalyzes the reversible aldol condensation of dihydroxyacetone phosphate (DHAP or glycerone-phosphate) with glyceraldehyde 3-phosphate (G3P) to produce tagatose 1,6-bisphosphate (TBP). Requires GatZ subunit for full activity and stability. Is involved in the catabolism of galactitol.</text>
</comment>
<comment type="catalytic activity">
    <reaction evidence="1">
        <text>D-tagatofuranose 1,6-bisphosphate = D-glyceraldehyde 3-phosphate + dihydroxyacetone phosphate</text>
        <dbReference type="Rhea" id="RHEA:22948"/>
        <dbReference type="ChEBI" id="CHEBI:57642"/>
        <dbReference type="ChEBI" id="CHEBI:58694"/>
        <dbReference type="ChEBI" id="CHEBI:59776"/>
        <dbReference type="EC" id="4.1.2.40"/>
    </reaction>
</comment>
<comment type="cofactor">
    <cofactor evidence="1">
        <name>Zn(2+)</name>
        <dbReference type="ChEBI" id="CHEBI:29105"/>
    </cofactor>
    <text evidence="1">Binds 1 zinc ion per subunit.</text>
</comment>
<comment type="pathway">
    <text evidence="1">Carbohydrate metabolism; D-tagatose 6-phosphate degradation; D-glyceraldehyde 3-phosphate and glycerone phosphate from D-tagatose 6-phosphate: step 2/2.</text>
</comment>
<comment type="subunit">
    <text evidence="1">Forms a complex with GatZ.</text>
</comment>
<comment type="similarity">
    <text evidence="1">Belongs to the class II fructose-bisphosphate aldolase family. TagBP aldolase GatY subfamily.</text>
</comment>
<organism>
    <name type="scientific">Escherichia coli O139:H28 (strain E24377A / ETEC)</name>
    <dbReference type="NCBI Taxonomy" id="331111"/>
    <lineage>
        <taxon>Bacteria</taxon>
        <taxon>Pseudomonadati</taxon>
        <taxon>Pseudomonadota</taxon>
        <taxon>Gammaproteobacteria</taxon>
        <taxon>Enterobacterales</taxon>
        <taxon>Enterobacteriaceae</taxon>
        <taxon>Escherichia</taxon>
    </lineage>
</organism>
<dbReference type="EC" id="4.1.2.40" evidence="1"/>
<dbReference type="EMBL" id="CP000800">
    <property type="protein sequence ID" value="ABV18342.1"/>
    <property type="molecule type" value="Genomic_DNA"/>
</dbReference>
<dbReference type="RefSeq" id="WP_012138761.1">
    <property type="nucleotide sequence ID" value="NC_009801.1"/>
</dbReference>
<dbReference type="SMR" id="A7ZNR5"/>
<dbReference type="KEGG" id="ecw:EcE24377A_2384"/>
<dbReference type="HOGENOM" id="CLU_040088_0_1_6"/>
<dbReference type="UniPathway" id="UPA00704">
    <property type="reaction ID" value="UER00716"/>
</dbReference>
<dbReference type="Proteomes" id="UP000001122">
    <property type="component" value="Chromosome"/>
</dbReference>
<dbReference type="GO" id="GO:0005829">
    <property type="term" value="C:cytosol"/>
    <property type="evidence" value="ECO:0007669"/>
    <property type="project" value="TreeGrafter"/>
</dbReference>
<dbReference type="GO" id="GO:0009025">
    <property type="term" value="F:tagatose-bisphosphate aldolase activity"/>
    <property type="evidence" value="ECO:0007669"/>
    <property type="project" value="UniProtKB-UniRule"/>
</dbReference>
<dbReference type="GO" id="GO:0008270">
    <property type="term" value="F:zinc ion binding"/>
    <property type="evidence" value="ECO:0007669"/>
    <property type="project" value="UniProtKB-UniRule"/>
</dbReference>
<dbReference type="GO" id="GO:2001059">
    <property type="term" value="P:D-tagatose 6-phosphate catabolic process"/>
    <property type="evidence" value="ECO:0007669"/>
    <property type="project" value="UniProtKB-UniRule"/>
</dbReference>
<dbReference type="GO" id="GO:0019404">
    <property type="term" value="P:galactitol catabolic process"/>
    <property type="evidence" value="ECO:0007669"/>
    <property type="project" value="InterPro"/>
</dbReference>
<dbReference type="CDD" id="cd00947">
    <property type="entry name" value="TBP_aldolase_IIB"/>
    <property type="match status" value="1"/>
</dbReference>
<dbReference type="FunFam" id="3.20.20.70:FF:000043">
    <property type="entry name" value="D-tagatose-1,6-bisphosphate aldolase subunit GatY"/>
    <property type="match status" value="1"/>
</dbReference>
<dbReference type="Gene3D" id="3.20.20.70">
    <property type="entry name" value="Aldolase class I"/>
    <property type="match status" value="1"/>
</dbReference>
<dbReference type="HAMAP" id="MF_01294">
    <property type="entry name" value="TagBP_aldolase_GatY"/>
    <property type="match status" value="1"/>
</dbReference>
<dbReference type="InterPro" id="IPR013785">
    <property type="entry name" value="Aldolase_TIM"/>
</dbReference>
<dbReference type="InterPro" id="IPR050246">
    <property type="entry name" value="Class_II_FBP_aldolase"/>
</dbReference>
<dbReference type="InterPro" id="IPR000771">
    <property type="entry name" value="FBA_II"/>
</dbReference>
<dbReference type="InterPro" id="IPR011288">
    <property type="entry name" value="TagBP_ald_KbaY/GatY"/>
</dbReference>
<dbReference type="InterPro" id="IPR023955">
    <property type="entry name" value="TagBP_aldolase_GatY"/>
</dbReference>
<dbReference type="NCBIfam" id="TIGR00167">
    <property type="entry name" value="cbbA"/>
    <property type="match status" value="1"/>
</dbReference>
<dbReference type="NCBIfam" id="NF006626">
    <property type="entry name" value="PRK09195.1"/>
    <property type="match status" value="1"/>
</dbReference>
<dbReference type="NCBIfam" id="NF009374">
    <property type="entry name" value="PRK12737.1"/>
    <property type="match status" value="1"/>
</dbReference>
<dbReference type="NCBIfam" id="TIGR01858">
    <property type="entry name" value="tag_bisphos_ald"/>
    <property type="match status" value="1"/>
</dbReference>
<dbReference type="PANTHER" id="PTHR30304">
    <property type="entry name" value="D-TAGATOSE-1,6-BISPHOSPHATE ALDOLASE"/>
    <property type="match status" value="1"/>
</dbReference>
<dbReference type="PANTHER" id="PTHR30304:SF0">
    <property type="entry name" value="D-TAGATOSE-1,6-BISPHOSPHATE ALDOLASE SUBUNIT GATY-RELATED"/>
    <property type="match status" value="1"/>
</dbReference>
<dbReference type="Pfam" id="PF01116">
    <property type="entry name" value="F_bP_aldolase"/>
    <property type="match status" value="1"/>
</dbReference>
<dbReference type="PIRSF" id="PIRSF001359">
    <property type="entry name" value="F_bP_aldolase_II"/>
    <property type="match status" value="1"/>
</dbReference>
<dbReference type="SUPFAM" id="SSF51569">
    <property type="entry name" value="Aldolase"/>
    <property type="match status" value="1"/>
</dbReference>
<dbReference type="PROSITE" id="PS00602">
    <property type="entry name" value="ALDOLASE_CLASS_II_1"/>
    <property type="match status" value="1"/>
</dbReference>
<dbReference type="PROSITE" id="PS00806">
    <property type="entry name" value="ALDOLASE_CLASS_II_2"/>
    <property type="match status" value="1"/>
</dbReference>
<reference key="1">
    <citation type="journal article" date="2008" name="J. Bacteriol.">
        <title>The pangenome structure of Escherichia coli: comparative genomic analysis of E. coli commensal and pathogenic isolates.</title>
        <authorList>
            <person name="Rasko D.A."/>
            <person name="Rosovitz M.J."/>
            <person name="Myers G.S.A."/>
            <person name="Mongodin E.F."/>
            <person name="Fricke W.F."/>
            <person name="Gajer P."/>
            <person name="Crabtree J."/>
            <person name="Sebaihia M."/>
            <person name="Thomson N.R."/>
            <person name="Chaudhuri R."/>
            <person name="Henderson I.R."/>
            <person name="Sperandio V."/>
            <person name="Ravel J."/>
        </authorList>
    </citation>
    <scope>NUCLEOTIDE SEQUENCE [LARGE SCALE GENOMIC DNA]</scope>
    <source>
        <strain>E24377A / ETEC</strain>
    </source>
</reference>
<proteinExistence type="inferred from homology"/>
<keyword id="KW-0298">Galactitol metabolism</keyword>
<keyword id="KW-0456">Lyase</keyword>
<keyword id="KW-0479">Metal-binding</keyword>
<keyword id="KW-1185">Reference proteome</keyword>
<keyword id="KW-0862">Zinc</keyword>
<name>GATY_ECO24</name>
<gene>
    <name evidence="1" type="primary">gatY</name>
    <name type="ordered locus">EcE24377A_2384</name>
</gene>